<proteinExistence type="evidence at transcript level"/>
<feature type="chain" id="PRO_0000337042" description="NADH-cytochrome b5 reductase-like">
    <location>
        <begin position="1"/>
        <end position="316"/>
    </location>
</feature>
<feature type="domain" description="Oxidoreductase-like">
    <location>
        <begin position="17"/>
        <end position="53"/>
    </location>
</feature>
<feature type="domain" description="FAD-binding FR-type" evidence="2">
    <location>
        <begin position="76"/>
        <end position="178"/>
    </location>
</feature>
<feature type="binding site" evidence="1">
    <location>
        <begin position="158"/>
        <end position="173"/>
    </location>
    <ligand>
        <name>FAD</name>
        <dbReference type="ChEBI" id="CHEBI:57692"/>
    </ligand>
</feature>
<feature type="binding site" evidence="1">
    <location>
        <begin position="183"/>
        <end position="215"/>
    </location>
    <ligand>
        <name>FAD</name>
        <dbReference type="ChEBI" id="CHEBI:57692"/>
    </ligand>
</feature>
<feature type="splice variant" id="VSP_033848" description="In isoform 4." evidence="3">
    <location>
        <begin position="1"/>
        <end position="85"/>
    </location>
</feature>
<feature type="splice variant" id="VSP_033849" description="In isoform 3." evidence="4">
    <location>
        <begin position="1"/>
        <end position="60"/>
    </location>
</feature>
<feature type="splice variant" id="VSP_033850" description="In isoform 3." evidence="4">
    <original>KQPPESQ</original>
    <variation>MNNKDLE</variation>
    <location>
        <begin position="61"/>
        <end position="67"/>
    </location>
</feature>
<feature type="splice variant" id="VSP_033851" description="In isoform 2." evidence="4">
    <location>
        <begin position="146"/>
        <end position="180"/>
    </location>
</feature>
<feature type="splice variant" id="VSP_033852" description="In isoform 4." evidence="3">
    <original>EVSPEQLPWSYRDKTHFGRLGQELVAELVACCRR</original>
    <variation>ASPSPSYRGGSRLTEVLDQGGARTGPVCLTLLSL</variation>
    <location>
        <begin position="250"/>
        <end position="283"/>
    </location>
</feature>
<feature type="splice variant" id="VSP_033853" description="In isoform 4." evidence="3">
    <location>
        <begin position="284"/>
        <end position="316"/>
    </location>
</feature>
<evidence type="ECO:0000250" key="1"/>
<evidence type="ECO:0000255" key="2">
    <source>
        <dbReference type="PROSITE-ProRule" id="PRU00716"/>
    </source>
</evidence>
<evidence type="ECO:0000303" key="3">
    <source>
    </source>
</evidence>
<evidence type="ECO:0000303" key="4">
    <source>
    </source>
</evidence>
<evidence type="ECO:0000305" key="5"/>
<reference key="1">
    <citation type="journal article" date="2004" name="DNA Res.">
        <title>Prediction of the coding sequences of mouse homologues of FLJ genes: the complete nucleotide sequences of 110 mouse FLJ-homologous cDNAs identified by screening of terminal sequences of cDNA clones randomly sampled from size-fractionated libraries.</title>
        <authorList>
            <person name="Okazaki N."/>
            <person name="Kikuno R."/>
            <person name="Ohara R."/>
            <person name="Inamoto S."/>
            <person name="Koseki H."/>
            <person name="Hiraoka S."/>
            <person name="Saga Y."/>
            <person name="Kitamura H."/>
            <person name="Nakagawa T."/>
            <person name="Nagase T."/>
            <person name="Ohara O."/>
            <person name="Koga H."/>
        </authorList>
    </citation>
    <scope>NUCLEOTIDE SEQUENCE [LARGE SCALE MRNA] (ISOFORM 4)</scope>
    <source>
        <strain>ICR</strain>
        <tissue>Embryonic tail</tissue>
    </source>
</reference>
<reference key="2">
    <citation type="journal article" date="2009" name="PLoS Biol.">
        <title>Lineage-specific biology revealed by a finished genome assembly of the mouse.</title>
        <authorList>
            <person name="Church D.M."/>
            <person name="Goodstadt L."/>
            <person name="Hillier L.W."/>
            <person name="Zody M.C."/>
            <person name="Goldstein S."/>
            <person name="She X."/>
            <person name="Bult C.J."/>
            <person name="Agarwala R."/>
            <person name="Cherry J.L."/>
            <person name="DiCuccio M."/>
            <person name="Hlavina W."/>
            <person name="Kapustin Y."/>
            <person name="Meric P."/>
            <person name="Maglott D."/>
            <person name="Birtle Z."/>
            <person name="Marques A.C."/>
            <person name="Graves T."/>
            <person name="Zhou S."/>
            <person name="Teague B."/>
            <person name="Potamousis K."/>
            <person name="Churas C."/>
            <person name="Place M."/>
            <person name="Herschleb J."/>
            <person name="Runnheim R."/>
            <person name="Forrest D."/>
            <person name="Amos-Landgraf J."/>
            <person name="Schwartz D.C."/>
            <person name="Cheng Z."/>
            <person name="Lindblad-Toh K."/>
            <person name="Eichler E.E."/>
            <person name="Ponting C.P."/>
        </authorList>
    </citation>
    <scope>NUCLEOTIDE SEQUENCE [LARGE SCALE GENOMIC DNA]</scope>
    <source>
        <strain>C57BL/6J</strain>
    </source>
</reference>
<reference key="3">
    <citation type="journal article" date="2004" name="Genome Res.">
        <title>The status, quality, and expansion of the NIH full-length cDNA project: the Mammalian Gene Collection (MGC).</title>
        <authorList>
            <consortium name="The MGC Project Team"/>
        </authorList>
    </citation>
    <scope>NUCLEOTIDE SEQUENCE [LARGE SCALE MRNA] (ISOFORMS 2 AND 3)</scope>
    <source>
        <strain>FVB/N</strain>
        <tissue>Liver</tissue>
        <tissue>Mammary tumor</tissue>
    </source>
</reference>
<comment type="function">
    <text evidence="1">NADH-cytochrome b5 reductases are involved in desaturation and elongation of fatty acids, cholesterol biosynthesis, drug metabolism, and, in erythrocyte, methemoglobin reduction.</text>
</comment>
<comment type="catalytic activity">
    <reaction>
        <text>2 Fe(III)-[cytochrome b5] + NADH = 2 Fe(II)-[cytochrome b5] + NAD(+) + H(+)</text>
        <dbReference type="Rhea" id="RHEA:46680"/>
        <dbReference type="Rhea" id="RHEA-COMP:10438"/>
        <dbReference type="Rhea" id="RHEA-COMP:10439"/>
        <dbReference type="ChEBI" id="CHEBI:15378"/>
        <dbReference type="ChEBI" id="CHEBI:29033"/>
        <dbReference type="ChEBI" id="CHEBI:29034"/>
        <dbReference type="ChEBI" id="CHEBI:57540"/>
        <dbReference type="ChEBI" id="CHEBI:57945"/>
        <dbReference type="EC" id="1.6.2.2"/>
    </reaction>
</comment>
<comment type="cofactor">
    <cofactor evidence="1">
        <name>FAD</name>
        <dbReference type="ChEBI" id="CHEBI:57692"/>
    </cofactor>
</comment>
<comment type="alternative products">
    <event type="alternative splicing"/>
    <isoform>
        <id>B1AS42-1</id>
        <name>1</name>
        <sequence type="displayed"/>
    </isoform>
    <isoform>
        <id>B1AS42-2</id>
        <name>2</name>
        <sequence type="described" ref="VSP_033851"/>
    </isoform>
    <isoform>
        <id>B1AS42-3</id>
        <name>3</name>
        <sequence type="described" ref="VSP_033849 VSP_033850"/>
    </isoform>
    <isoform>
        <id>B1AS42-4</id>
        <name>4</name>
        <sequence type="described" ref="VSP_033848 VSP_033852 VSP_033853"/>
    </isoform>
</comment>
<comment type="similarity">
    <text evidence="5">Belongs to the flavoprotein pyridine nucleotide cytochrome reductase family.</text>
</comment>
<comment type="sequence caution" evidence="5">
    <conflict type="erroneous initiation">
        <sequence resource="EMBL-CDS" id="AAH04750"/>
    </conflict>
</comment>
<comment type="sequence caution" evidence="5">
    <conflict type="erroneous initiation">
        <sequence resource="EMBL-CDS" id="BAD90340"/>
    </conflict>
</comment>
<protein>
    <recommendedName>
        <fullName>NADH-cytochrome b5 reductase-like</fullName>
        <ecNumber>1.6.2.2</ecNumber>
    </recommendedName>
</protein>
<accession>B1AS42</accession>
<accession>B1AS41</accession>
<accession>Q571N5</accession>
<accession>Q80W48</accession>
<accession>Q99KB7</accession>
<name>NB5R5_MOUSE</name>
<keyword id="KW-0025">Alternative splicing</keyword>
<keyword id="KW-0274">FAD</keyword>
<keyword id="KW-0285">Flavoprotein</keyword>
<keyword id="KW-0520">NAD</keyword>
<keyword id="KW-0560">Oxidoreductase</keyword>
<keyword id="KW-1185">Reference proteome</keyword>
<organism>
    <name type="scientific">Mus musculus</name>
    <name type="common">Mouse</name>
    <dbReference type="NCBI Taxonomy" id="10090"/>
    <lineage>
        <taxon>Eukaryota</taxon>
        <taxon>Metazoa</taxon>
        <taxon>Chordata</taxon>
        <taxon>Craniata</taxon>
        <taxon>Vertebrata</taxon>
        <taxon>Euteleostomi</taxon>
        <taxon>Mammalia</taxon>
        <taxon>Eutheria</taxon>
        <taxon>Euarchontoglires</taxon>
        <taxon>Glires</taxon>
        <taxon>Rodentia</taxon>
        <taxon>Myomorpha</taxon>
        <taxon>Muroidea</taxon>
        <taxon>Muridae</taxon>
        <taxon>Murinae</taxon>
        <taxon>Mus</taxon>
        <taxon>Mus</taxon>
    </lineage>
</organism>
<dbReference type="EC" id="1.6.2.2"/>
<dbReference type="EMBL" id="AK220154">
    <property type="protein sequence ID" value="BAD90340.1"/>
    <property type="status" value="ALT_INIT"/>
    <property type="molecule type" value="mRNA"/>
</dbReference>
<dbReference type="EMBL" id="AL607132">
    <property type="status" value="NOT_ANNOTATED_CDS"/>
    <property type="molecule type" value="Genomic_DNA"/>
</dbReference>
<dbReference type="EMBL" id="BC004750">
    <property type="protein sequence ID" value="AAH04750.1"/>
    <property type="status" value="ALT_INIT"/>
    <property type="molecule type" value="mRNA"/>
</dbReference>
<dbReference type="EMBL" id="BC043687">
    <property type="protein sequence ID" value="AAH43687.1"/>
    <property type="molecule type" value="mRNA"/>
</dbReference>
<dbReference type="CCDS" id="CCDS38829.1">
    <molecule id="B1AS42-3"/>
</dbReference>
<dbReference type="CCDS" id="CCDS84765.1">
    <molecule id="B1AS42-1"/>
</dbReference>
<dbReference type="RefSeq" id="NP_001333481.1">
    <molecule id="B1AS42-1"/>
    <property type="nucleotide sequence ID" value="NM_001346552.2"/>
</dbReference>
<dbReference type="RefSeq" id="NP_001364012.1">
    <molecule id="B1AS42-1"/>
    <property type="nucleotide sequence ID" value="NM_001377083.1"/>
</dbReference>
<dbReference type="RefSeq" id="NP_001364013.1">
    <molecule id="B1AS42-1"/>
    <property type="nucleotide sequence ID" value="NM_001377084.1"/>
</dbReference>
<dbReference type="RefSeq" id="NP_780680.1">
    <molecule id="B1AS42-3"/>
    <property type="nucleotide sequence ID" value="NM_175471.4"/>
</dbReference>
<dbReference type="RefSeq" id="XP_036019908.1">
    <molecule id="B1AS42-1"/>
    <property type="nucleotide sequence ID" value="XM_036164015.1"/>
</dbReference>
<dbReference type="RefSeq" id="XP_036019910.1">
    <molecule id="B1AS42-2"/>
    <property type="nucleotide sequence ID" value="XM_036164017.1"/>
</dbReference>
<dbReference type="SMR" id="B1AS42"/>
<dbReference type="FunCoup" id="B1AS42">
    <property type="interactions" value="629"/>
</dbReference>
<dbReference type="STRING" id="10090.ENSMUSP00000102369"/>
<dbReference type="PhosphoSitePlus" id="B1AS42"/>
<dbReference type="SwissPalm" id="B1AS42"/>
<dbReference type="PaxDb" id="10090-ENSMUSP00000102369"/>
<dbReference type="ProteomicsDB" id="287610">
    <molecule id="B1AS42-1"/>
</dbReference>
<dbReference type="ProteomicsDB" id="287611">
    <molecule id="B1AS42-2"/>
</dbReference>
<dbReference type="DNASU" id="230582"/>
<dbReference type="Ensembl" id="ENSMUST00000030364.13">
    <molecule id="B1AS42-2"/>
    <property type="protein sequence ID" value="ENSMUSP00000030364.7"/>
    <property type="gene ID" value="ENSMUSG00000028621.18"/>
</dbReference>
<dbReference type="Ensembl" id="ENSMUST00000106756.9">
    <molecule id="B1AS42-3"/>
    <property type="protein sequence ID" value="ENSMUSP00000102367.3"/>
    <property type="gene ID" value="ENSMUSG00000028621.18"/>
</dbReference>
<dbReference type="Ensembl" id="ENSMUST00000106758.8">
    <molecule id="B1AS42-1"/>
    <property type="protein sequence ID" value="ENSMUSP00000102369.2"/>
    <property type="gene ID" value="ENSMUSG00000028621.18"/>
</dbReference>
<dbReference type="GeneID" id="230582"/>
<dbReference type="KEGG" id="mmu:230582"/>
<dbReference type="UCSC" id="uc008tzb.1">
    <molecule id="B1AS42-3"/>
    <property type="organism name" value="mouse"/>
</dbReference>
<dbReference type="UCSC" id="uc008tzc.1">
    <molecule id="B1AS42-2"/>
    <property type="organism name" value="mouse"/>
</dbReference>
<dbReference type="UCSC" id="uc008tzd.1">
    <molecule id="B1AS42-1"/>
    <property type="organism name" value="mouse"/>
</dbReference>
<dbReference type="AGR" id="MGI:1919657"/>
<dbReference type="CTD" id="606495"/>
<dbReference type="MGI" id="MGI:1919657">
    <property type="gene designation" value="Cyb5rl"/>
</dbReference>
<dbReference type="VEuPathDB" id="HostDB:ENSMUSG00000028621"/>
<dbReference type="eggNOG" id="KOG0534">
    <property type="taxonomic scope" value="Eukaryota"/>
</dbReference>
<dbReference type="GeneTree" id="ENSGT00920000149170"/>
<dbReference type="HOGENOM" id="CLU_003827_9_3_1"/>
<dbReference type="InParanoid" id="B1AS42"/>
<dbReference type="OMA" id="YSPYWTD"/>
<dbReference type="PhylomeDB" id="B1AS42"/>
<dbReference type="TreeFam" id="TF336549"/>
<dbReference type="Reactome" id="R-MMU-1237044">
    <property type="pathway name" value="Erythrocytes take up carbon dioxide and release oxygen"/>
</dbReference>
<dbReference type="BioGRID-ORCS" id="230582">
    <property type="hits" value="0 hits in 60 CRISPR screens"/>
</dbReference>
<dbReference type="PRO" id="PR:B1AS42"/>
<dbReference type="Proteomes" id="UP000000589">
    <property type="component" value="Chromosome 4"/>
</dbReference>
<dbReference type="RNAct" id="B1AS42">
    <property type="molecule type" value="protein"/>
</dbReference>
<dbReference type="Bgee" id="ENSMUSG00000028621">
    <property type="expression patterns" value="Expressed in right kidney and 79 other cell types or tissues"/>
</dbReference>
<dbReference type="ExpressionAtlas" id="B1AS42">
    <property type="expression patterns" value="baseline and differential"/>
</dbReference>
<dbReference type="GO" id="GO:0005789">
    <property type="term" value="C:endoplasmic reticulum membrane"/>
    <property type="evidence" value="ECO:0007669"/>
    <property type="project" value="UniProtKB-ARBA"/>
</dbReference>
<dbReference type="GO" id="GO:0005654">
    <property type="term" value="C:nucleoplasm"/>
    <property type="evidence" value="ECO:0007669"/>
    <property type="project" value="Ensembl"/>
</dbReference>
<dbReference type="GO" id="GO:0004128">
    <property type="term" value="F:cytochrome-b5 reductase activity, acting on NAD(P)H"/>
    <property type="evidence" value="ECO:0007669"/>
    <property type="project" value="UniProtKB-EC"/>
</dbReference>
<dbReference type="CDD" id="cd06183">
    <property type="entry name" value="cyt_b5_reduct_like"/>
    <property type="match status" value="1"/>
</dbReference>
<dbReference type="FunFam" id="2.40.30.10:FF:000105">
    <property type="entry name" value="NADH-cytochrome b5 reductase"/>
    <property type="match status" value="1"/>
</dbReference>
<dbReference type="Gene3D" id="3.40.50.80">
    <property type="entry name" value="Nucleotide-binding domain of ferredoxin-NADP reductase (FNR) module"/>
    <property type="match status" value="1"/>
</dbReference>
<dbReference type="Gene3D" id="2.40.30.10">
    <property type="entry name" value="Translation factors"/>
    <property type="match status" value="1"/>
</dbReference>
<dbReference type="InterPro" id="IPR001834">
    <property type="entry name" value="CBR-like"/>
</dbReference>
<dbReference type="InterPro" id="IPR008333">
    <property type="entry name" value="Cbr1-like_FAD-bd_dom"/>
</dbReference>
<dbReference type="InterPro" id="IPR017927">
    <property type="entry name" value="FAD-bd_FR_type"/>
</dbReference>
<dbReference type="InterPro" id="IPR001709">
    <property type="entry name" value="Flavoprot_Pyr_Nucl_cyt_Rdtase"/>
</dbReference>
<dbReference type="InterPro" id="IPR039261">
    <property type="entry name" value="FNR_nucleotide-bd"/>
</dbReference>
<dbReference type="InterPro" id="IPR019180">
    <property type="entry name" value="Oxidoreductase-like_N"/>
</dbReference>
<dbReference type="InterPro" id="IPR001433">
    <property type="entry name" value="OxRdtase_FAD/NAD-bd"/>
</dbReference>
<dbReference type="InterPro" id="IPR017938">
    <property type="entry name" value="Riboflavin_synthase-like_b-brl"/>
</dbReference>
<dbReference type="PANTHER" id="PTHR19370">
    <property type="entry name" value="NADH-CYTOCHROME B5 REDUCTASE"/>
    <property type="match status" value="1"/>
</dbReference>
<dbReference type="PANTHER" id="PTHR19370:SF184">
    <property type="entry name" value="NADH-CYTOCHROME B5 REDUCTASE-LIKE"/>
    <property type="match status" value="1"/>
</dbReference>
<dbReference type="Pfam" id="PF00970">
    <property type="entry name" value="FAD_binding_6"/>
    <property type="match status" value="1"/>
</dbReference>
<dbReference type="Pfam" id="PF00175">
    <property type="entry name" value="NAD_binding_1"/>
    <property type="match status" value="1"/>
</dbReference>
<dbReference type="Pfam" id="PF09791">
    <property type="entry name" value="Oxidored-like"/>
    <property type="match status" value="1"/>
</dbReference>
<dbReference type="PRINTS" id="PR00406">
    <property type="entry name" value="CYTB5RDTASE"/>
</dbReference>
<dbReference type="PRINTS" id="PR00371">
    <property type="entry name" value="FPNCR"/>
</dbReference>
<dbReference type="SUPFAM" id="SSF52343">
    <property type="entry name" value="Ferredoxin reductase-like, C-terminal NADP-linked domain"/>
    <property type="match status" value="1"/>
</dbReference>
<dbReference type="SUPFAM" id="SSF63380">
    <property type="entry name" value="Riboflavin synthase domain-like"/>
    <property type="match status" value="1"/>
</dbReference>
<dbReference type="PROSITE" id="PS51384">
    <property type="entry name" value="FAD_FR"/>
    <property type="match status" value="1"/>
</dbReference>
<sequence length="316" mass="35884">MAETEEEEDSEAWLRLKPVEPLPSQCCGSGCSPCVFDLYYRDLERWETARARNDRSLLSGKQPPESQSCSAKLSPETFLAFHISTMEKVTKDTYLVRFTLPGNSRLGLRPGQHLILRGVVDGLEIQRAYTPISPVTAEGYFDVLIKCYRTGLMSQYVESWRTGDTAFWRGPFGSFLYEPKKYGELLMLAAGTGLAPMVPILQSITDDEDDETFVTLVGCFKTFEGIYLKTFFQEQARFWNVQTFFVLSQEVSPEQLPWSYRDKTHFGRLGQELVAELVACCRRKPFTLVCGSPAFNEDMARCLLSAGLTEDSYFLF</sequence>
<gene>
    <name type="primary">Cyb5rl</name>
</gene>